<reference key="1">
    <citation type="journal article" date="2006" name="PLoS Genet.">
        <title>Genome sequence of Rickettsia bellii illuminates the role of amoebae in gene exchanges between intracellular pathogens.</title>
        <authorList>
            <person name="Ogata H."/>
            <person name="La Scola B."/>
            <person name="Audic S."/>
            <person name="Renesto P."/>
            <person name="Blanc G."/>
            <person name="Robert C."/>
            <person name="Fournier P.-E."/>
            <person name="Claverie J.-M."/>
            <person name="Raoult D."/>
        </authorList>
    </citation>
    <scope>NUCLEOTIDE SEQUENCE [LARGE SCALE GENOMIC DNA]</scope>
    <source>
        <strain>RML369-C</strain>
    </source>
</reference>
<accession>Q1RHK8</accession>
<keyword id="KW-0997">Cell inner membrane</keyword>
<keyword id="KW-1003">Cell membrane</keyword>
<keyword id="KW-0472">Membrane</keyword>
<keyword id="KW-0812">Transmembrane</keyword>
<keyword id="KW-1133">Transmembrane helix</keyword>
<keyword id="KW-0813">Transport</keyword>
<proteinExistence type="inferred from homology"/>
<gene>
    <name type="primary">ampG2</name>
    <name type="ordered locus">RBE_1075</name>
</gene>
<feature type="chain" id="PRO_0000281088" description="Putative transporter AmpG 2">
    <location>
        <begin position="1"/>
        <end position="404"/>
    </location>
</feature>
<feature type="transmembrane region" description="Helical" evidence="2">
    <location>
        <begin position="11"/>
        <end position="31"/>
    </location>
</feature>
<feature type="transmembrane region" description="Helical" evidence="2">
    <location>
        <begin position="49"/>
        <end position="69"/>
    </location>
</feature>
<feature type="transmembrane region" description="Helical" evidence="2">
    <location>
        <begin position="84"/>
        <end position="104"/>
    </location>
</feature>
<feature type="transmembrane region" description="Helical" evidence="2">
    <location>
        <begin position="109"/>
        <end position="129"/>
    </location>
</feature>
<feature type="transmembrane region" description="Helical" evidence="2">
    <location>
        <begin position="154"/>
        <end position="174"/>
    </location>
</feature>
<feature type="transmembrane region" description="Helical" evidence="2">
    <location>
        <begin position="177"/>
        <end position="197"/>
    </location>
</feature>
<feature type="transmembrane region" description="Helical" evidence="2">
    <location>
        <begin position="224"/>
        <end position="244"/>
    </location>
</feature>
<feature type="transmembrane region" description="Helical" evidence="2">
    <location>
        <begin position="261"/>
        <end position="281"/>
    </location>
</feature>
<feature type="transmembrane region" description="Helical" evidence="2">
    <location>
        <begin position="294"/>
        <end position="311"/>
    </location>
</feature>
<feature type="transmembrane region" description="Helical" evidence="2">
    <location>
        <begin position="315"/>
        <end position="337"/>
    </location>
</feature>
<feature type="transmembrane region" description="Helical" evidence="2">
    <location>
        <begin position="353"/>
        <end position="373"/>
    </location>
</feature>
<feature type="transmembrane region" description="Helical" evidence="2">
    <location>
        <begin position="378"/>
        <end position="398"/>
    </location>
</feature>
<protein>
    <recommendedName>
        <fullName>Putative transporter AmpG 2</fullName>
    </recommendedName>
</protein>
<dbReference type="EMBL" id="CP000087">
    <property type="protein sequence ID" value="ABE05156.1"/>
    <property type="status" value="ALT_INIT"/>
    <property type="molecule type" value="Genomic_DNA"/>
</dbReference>
<dbReference type="SMR" id="Q1RHK8"/>
<dbReference type="KEGG" id="rbe:RBE_1075"/>
<dbReference type="eggNOG" id="COG2271">
    <property type="taxonomic scope" value="Bacteria"/>
</dbReference>
<dbReference type="HOGENOM" id="CLU_029352_1_2_5"/>
<dbReference type="Proteomes" id="UP000001951">
    <property type="component" value="Chromosome"/>
</dbReference>
<dbReference type="GO" id="GO:0005886">
    <property type="term" value="C:plasma membrane"/>
    <property type="evidence" value="ECO:0007669"/>
    <property type="project" value="UniProtKB-SubCell"/>
</dbReference>
<dbReference type="GO" id="GO:0022857">
    <property type="term" value="F:transmembrane transporter activity"/>
    <property type="evidence" value="ECO:0007669"/>
    <property type="project" value="InterPro"/>
</dbReference>
<dbReference type="Gene3D" id="1.20.1250.20">
    <property type="entry name" value="MFS general substrate transporter like domains"/>
    <property type="match status" value="2"/>
</dbReference>
<dbReference type="InterPro" id="IPR004752">
    <property type="entry name" value="AmpG_permease/AT-1"/>
</dbReference>
<dbReference type="InterPro" id="IPR011701">
    <property type="entry name" value="MFS"/>
</dbReference>
<dbReference type="InterPro" id="IPR036259">
    <property type="entry name" value="MFS_trans_sf"/>
</dbReference>
<dbReference type="PANTHER" id="PTHR12778:SF10">
    <property type="entry name" value="MAJOR FACILITATOR SUPERFAMILY DOMAIN-CONTAINING PROTEIN 3"/>
    <property type="match status" value="1"/>
</dbReference>
<dbReference type="PANTHER" id="PTHR12778">
    <property type="entry name" value="SOLUTE CARRIER FAMILY 33 ACETYL-COA TRANSPORTER -RELATED"/>
    <property type="match status" value="1"/>
</dbReference>
<dbReference type="Pfam" id="PF07690">
    <property type="entry name" value="MFS_1"/>
    <property type="match status" value="1"/>
</dbReference>
<dbReference type="SUPFAM" id="SSF103473">
    <property type="entry name" value="MFS general substrate transporter"/>
    <property type="match status" value="1"/>
</dbReference>
<comment type="subcellular location">
    <subcellularLocation>
        <location evidence="1">Cell inner membrane</location>
        <topology evidence="1">Multi-pass membrane protein</topology>
    </subcellularLocation>
</comment>
<comment type="similarity">
    <text evidence="3">Belongs to the major facilitator superfamily.</text>
</comment>
<comment type="sequence caution" evidence="3">
    <conflict type="erroneous initiation">
        <sequence resource="EMBL-CDS" id="ABE05156"/>
    </conflict>
</comment>
<name>AMPG2_RICBR</name>
<organism>
    <name type="scientific">Rickettsia bellii (strain RML369-C)</name>
    <dbReference type="NCBI Taxonomy" id="336407"/>
    <lineage>
        <taxon>Bacteria</taxon>
        <taxon>Pseudomonadati</taxon>
        <taxon>Pseudomonadota</taxon>
        <taxon>Alphaproteobacteria</taxon>
        <taxon>Rickettsiales</taxon>
        <taxon>Rickettsiaceae</taxon>
        <taxon>Rickettsieae</taxon>
        <taxon>Rickettsia</taxon>
        <taxon>belli group</taxon>
    </lineage>
</organism>
<evidence type="ECO:0000250" key="1"/>
<evidence type="ECO:0000255" key="2"/>
<evidence type="ECO:0000305" key="3"/>
<sequence length="404" mass="46278">MISNFSRLQNIYNILFILFISLPGGLIYLLTGSTLSFWLRESGFDKITIGLFSLVNFIHIFKFLWGPLLEKISFIPSNSRGYKYCLIFSLLSCICCVYILTGFNPTTNFISFSLCLIILAFFSSIYDMLLQSSQMLLINNKNWGISEAACTSGFRIGILISGSGALYLSTIISWQEVYRTMAILCVPSLLLIIFYPLKFKEKIAVNDFDRFWHAFYDFIKKPKWLIIVGFMLLYRLQDNFLAVMPNMFYLDIGYTKKDLALGYKAFGMCATIAGGFIGGFLCRKYEYTYIFKRVLVYHALSSITFLLLYSYSQTITTLYIAVFLQEFTKGLTMSPFFSYQLRCCSSKYCITQIALITSIAYISTVLFGSISGYAATYLGWGYFFAIASFCFIPAYILIRYLPRV</sequence>